<dbReference type="SMR" id="P82160"/>
<dbReference type="iPTMnet" id="P82160"/>
<dbReference type="GO" id="GO:0043292">
    <property type="term" value="C:contractile muscle fiber"/>
    <property type="evidence" value="ECO:0007669"/>
    <property type="project" value="TreeGrafter"/>
</dbReference>
<dbReference type="GO" id="GO:0016460">
    <property type="term" value="C:myosin II complex"/>
    <property type="evidence" value="ECO:0007669"/>
    <property type="project" value="TreeGrafter"/>
</dbReference>
<dbReference type="GO" id="GO:0005509">
    <property type="term" value="F:calcium ion binding"/>
    <property type="evidence" value="ECO:0007669"/>
    <property type="project" value="InterPro"/>
</dbReference>
<dbReference type="CDD" id="cd00051">
    <property type="entry name" value="EFh"/>
    <property type="match status" value="1"/>
</dbReference>
<dbReference type="FunFam" id="1.10.238.10:FF:000003">
    <property type="entry name" value="Calmodulin A"/>
    <property type="match status" value="1"/>
</dbReference>
<dbReference type="Gene3D" id="1.10.238.10">
    <property type="entry name" value="EF-hand"/>
    <property type="match status" value="2"/>
</dbReference>
<dbReference type="InterPro" id="IPR050230">
    <property type="entry name" value="CALM/Myosin/TropC-like"/>
</dbReference>
<dbReference type="InterPro" id="IPR011992">
    <property type="entry name" value="EF-hand-dom_pair"/>
</dbReference>
<dbReference type="InterPro" id="IPR002048">
    <property type="entry name" value="EF_hand_dom"/>
</dbReference>
<dbReference type="PANTHER" id="PTHR23048">
    <property type="entry name" value="MYOSIN LIGHT CHAIN 1, 3"/>
    <property type="match status" value="1"/>
</dbReference>
<dbReference type="PANTHER" id="PTHR23048:SF3">
    <property type="entry name" value="MYOSIN LIGHT CHAIN 1_3, SKELETAL MUSCLE ISOFORM"/>
    <property type="match status" value="1"/>
</dbReference>
<dbReference type="SUPFAM" id="SSF47473">
    <property type="entry name" value="EF-hand"/>
    <property type="match status" value="1"/>
</dbReference>
<dbReference type="PROSITE" id="PS50222">
    <property type="entry name" value="EF_HAND_2"/>
    <property type="match status" value="2"/>
</dbReference>
<evidence type="ECO:0000255" key="1">
    <source>
        <dbReference type="PROSITE-ProRule" id="PRU00448"/>
    </source>
</evidence>
<evidence type="ECO:0000269" key="2">
    <source>
    </source>
</evidence>
<name>MLE3_CHERA</name>
<comment type="subunit">
    <text>Myosin is a hexamer of 2 heavy chains and 4 light chains.</text>
</comment>
<comment type="miscellaneous">
    <text>In fish, myosin MLC1 and MLC3 appear to be produced by two different genes unlike in birds and mammals, where they are produced from a single gene by alternative splicing.</text>
</comment>
<accession>P82160</accession>
<proteinExistence type="evidence at protein level"/>
<protein>
    <recommendedName>
        <fullName>Myosin light chain 3, skeletal muscle isoform</fullName>
    </recommendedName>
    <alternativeName>
        <fullName>LC-3</fullName>
        <shortName>LC3</shortName>
    </alternativeName>
    <alternativeName>
        <fullName>Myosin light chain alkali 2</fullName>
        <shortName>Myosin light chain A2</shortName>
    </alternativeName>
</protein>
<keyword id="KW-0007">Acetylation</keyword>
<keyword id="KW-0903">Direct protein sequencing</keyword>
<keyword id="KW-0505">Motor protein</keyword>
<keyword id="KW-0514">Muscle protein</keyword>
<keyword id="KW-0518">Myosin</keyword>
<keyword id="KW-0677">Repeat</keyword>
<feature type="chain" id="PRO_0000198707" description="Myosin light chain 3, skeletal muscle isoform">
    <location>
        <begin position="1"/>
        <end position="148"/>
    </location>
</feature>
<feature type="domain" description="EF-hand 1" evidence="1">
    <location>
        <begin position="6"/>
        <end position="41"/>
    </location>
</feature>
<feature type="domain" description="EF-hand 2" evidence="1">
    <location>
        <begin position="82"/>
        <end position="117"/>
    </location>
</feature>
<feature type="modified residue" description="N-acetylthreonine" evidence="2">
    <location>
        <position position="1"/>
    </location>
</feature>
<sequence length="148" mass="16368">TEFSADQIEDFKEAFGLFDRIGDSQVAFNQVADIMRALGQNPTNKDVTKILGNPSADDMANKRLNFDAFLPMLKEVDALPKGTYDDYVEGLRVFDKEGNGTVMGAELRIVLSTLGEKMTEPEIDALMAGQEDEGSVHYEAFVKHIMSV</sequence>
<organism>
    <name type="scientific">Chelon ramada</name>
    <name type="common">Thin-lipped grey mullet</name>
    <name type="synonym">Mugil ramada</name>
    <dbReference type="NCBI Taxonomy" id="30804"/>
    <lineage>
        <taxon>Eukaryota</taxon>
        <taxon>Metazoa</taxon>
        <taxon>Chordata</taxon>
        <taxon>Craniata</taxon>
        <taxon>Vertebrata</taxon>
        <taxon>Euteleostomi</taxon>
        <taxon>Actinopterygii</taxon>
        <taxon>Neopterygii</taxon>
        <taxon>Teleostei</taxon>
        <taxon>Neoteleostei</taxon>
        <taxon>Acanthomorphata</taxon>
        <taxon>Ovalentaria</taxon>
        <taxon>Mugilomorphae</taxon>
        <taxon>Mugilidae</taxon>
        <taxon>Chelon</taxon>
    </lineage>
</organism>
<reference key="1">
    <citation type="journal article" date="1991" name="J. Muscle Res. Cell Motil.">
        <title>Fish myosin alkali light chains originate from two different genes.</title>
        <authorList>
            <person name="dalla Libera L."/>
            <person name="Carpene E."/>
            <person name="Theibert J."/>
            <person name="Collins J.H."/>
        </authorList>
    </citation>
    <scope>PROTEIN SEQUENCE</scope>
    <scope>ACETYLATION AT THR-1</scope>
    <source>
        <tissue>Fast-twitch skeletal muscle</tissue>
    </source>
</reference>